<sequence length="428" mass="46389">MRYTKSEEAMKVAETLMPGGVNSPVRAFKSVDTPAIFMDHGKGSKIYDIDGNEYIDYVLSWGPLILGHRDPQVISHLHEAIDKGTSFGASTLLENKLAQLVIDRVPSIEKVRMVSSGTEATLDTLRLARGYTGRNKIVKFEGCYHGHSDSLLIKAGSGVATLGLPDSPGVPEGIAKNTITVPYNDLDALKIAFEKFGDDIAGVIVEPVAGNMGVVPPIEGFLQGLRDITTEYGALLIFDEVMTGFRVGYHCAQGYFGVTPDLTCLGKVIGGGLPVGAFGGKKEIMDHIAPLGNIYQAGTLSGNPLAMTSGYETLSQLTPETYEYFNMLGDILEDGLKRVFAKHNVPITVNRAGSMIGYFLNEGPVTNFEQANKSDLKLFAEMYREMAKEGVFLPPSQFEGTFLSTAHTKEDIEKTIQAFDTALSRIVK</sequence>
<comment type="catalytic activity">
    <reaction evidence="1">
        <text>(S)-4-amino-5-oxopentanoate = 5-aminolevulinate</text>
        <dbReference type="Rhea" id="RHEA:14265"/>
        <dbReference type="ChEBI" id="CHEBI:57501"/>
        <dbReference type="ChEBI" id="CHEBI:356416"/>
        <dbReference type="EC" id="5.4.3.8"/>
    </reaction>
</comment>
<comment type="cofactor">
    <cofactor evidence="1">
        <name>pyridoxal 5'-phosphate</name>
        <dbReference type="ChEBI" id="CHEBI:597326"/>
    </cofactor>
</comment>
<comment type="pathway">
    <text evidence="1">Porphyrin-containing compound metabolism; protoporphyrin-IX biosynthesis; 5-aminolevulinate from L-glutamyl-tRNA(Glu): step 2/2.</text>
</comment>
<comment type="subunit">
    <text evidence="1">Homodimer.</text>
</comment>
<comment type="subcellular location">
    <subcellularLocation>
        <location evidence="1">Cytoplasm</location>
    </subcellularLocation>
</comment>
<comment type="similarity">
    <text evidence="1">Belongs to the class-III pyridoxal-phosphate-dependent aminotransferase family. HemL subfamily.</text>
</comment>
<gene>
    <name evidence="1" type="primary">hemL1</name>
    <name type="ordered locus">SAHV_1654</name>
</gene>
<reference key="1">
    <citation type="journal article" date="2008" name="Antimicrob. Agents Chemother.">
        <title>Mutated response regulator graR is responsible for phenotypic conversion of Staphylococcus aureus from heterogeneous vancomycin-intermediate resistance to vancomycin-intermediate resistance.</title>
        <authorList>
            <person name="Neoh H.-M."/>
            <person name="Cui L."/>
            <person name="Yuzawa H."/>
            <person name="Takeuchi F."/>
            <person name="Matsuo M."/>
            <person name="Hiramatsu K."/>
        </authorList>
    </citation>
    <scope>NUCLEOTIDE SEQUENCE [LARGE SCALE GENOMIC DNA]</scope>
    <source>
        <strain>Mu3 / ATCC 700698</strain>
    </source>
</reference>
<keyword id="KW-0963">Cytoplasm</keyword>
<keyword id="KW-0413">Isomerase</keyword>
<keyword id="KW-0627">Porphyrin biosynthesis</keyword>
<keyword id="KW-0663">Pyridoxal phosphate</keyword>
<evidence type="ECO:0000255" key="1">
    <source>
        <dbReference type="HAMAP-Rule" id="MF_00375"/>
    </source>
</evidence>
<protein>
    <recommendedName>
        <fullName evidence="1">Glutamate-1-semialdehyde 2,1-aminomutase 1</fullName>
        <shortName evidence="1">GSA 1</shortName>
        <ecNumber evidence="1">5.4.3.8</ecNumber>
    </recommendedName>
    <alternativeName>
        <fullName evidence="1">Glutamate-1-semialdehyde aminotransferase 1</fullName>
        <shortName evidence="1">GSA-AT 1</shortName>
    </alternativeName>
</protein>
<dbReference type="EC" id="5.4.3.8" evidence="1"/>
<dbReference type="EMBL" id="AP009324">
    <property type="protein sequence ID" value="BAF78537.1"/>
    <property type="molecule type" value="Genomic_DNA"/>
</dbReference>
<dbReference type="SMR" id="A7X388"/>
<dbReference type="KEGG" id="saw:SAHV_1654"/>
<dbReference type="HOGENOM" id="CLU_016922_1_5_9"/>
<dbReference type="UniPathway" id="UPA00251">
    <property type="reaction ID" value="UER00317"/>
</dbReference>
<dbReference type="GO" id="GO:0005737">
    <property type="term" value="C:cytoplasm"/>
    <property type="evidence" value="ECO:0007669"/>
    <property type="project" value="UniProtKB-SubCell"/>
</dbReference>
<dbReference type="GO" id="GO:0042286">
    <property type="term" value="F:glutamate-1-semialdehyde 2,1-aminomutase activity"/>
    <property type="evidence" value="ECO:0007669"/>
    <property type="project" value="UniProtKB-UniRule"/>
</dbReference>
<dbReference type="GO" id="GO:0030170">
    <property type="term" value="F:pyridoxal phosphate binding"/>
    <property type="evidence" value="ECO:0007669"/>
    <property type="project" value="InterPro"/>
</dbReference>
<dbReference type="GO" id="GO:0008483">
    <property type="term" value="F:transaminase activity"/>
    <property type="evidence" value="ECO:0007669"/>
    <property type="project" value="InterPro"/>
</dbReference>
<dbReference type="GO" id="GO:0006782">
    <property type="term" value="P:protoporphyrinogen IX biosynthetic process"/>
    <property type="evidence" value="ECO:0007669"/>
    <property type="project" value="UniProtKB-UniRule"/>
</dbReference>
<dbReference type="CDD" id="cd00610">
    <property type="entry name" value="OAT_like"/>
    <property type="match status" value="1"/>
</dbReference>
<dbReference type="FunFam" id="3.40.640.10:FF:000021">
    <property type="entry name" value="Glutamate-1-semialdehyde 2,1-aminomutase"/>
    <property type="match status" value="1"/>
</dbReference>
<dbReference type="Gene3D" id="3.90.1150.10">
    <property type="entry name" value="Aspartate Aminotransferase, domain 1"/>
    <property type="match status" value="1"/>
</dbReference>
<dbReference type="Gene3D" id="3.40.640.10">
    <property type="entry name" value="Type I PLP-dependent aspartate aminotransferase-like (Major domain)"/>
    <property type="match status" value="1"/>
</dbReference>
<dbReference type="HAMAP" id="MF_00375">
    <property type="entry name" value="HemL_aminotrans_3"/>
    <property type="match status" value="1"/>
</dbReference>
<dbReference type="InterPro" id="IPR004639">
    <property type="entry name" value="4pyrrol_synth_GluAld_NH2Trfase"/>
</dbReference>
<dbReference type="InterPro" id="IPR005814">
    <property type="entry name" value="Aminotrans_3"/>
</dbReference>
<dbReference type="InterPro" id="IPR049704">
    <property type="entry name" value="Aminotrans_3_PPA_site"/>
</dbReference>
<dbReference type="InterPro" id="IPR015424">
    <property type="entry name" value="PyrdxlP-dep_Trfase"/>
</dbReference>
<dbReference type="InterPro" id="IPR015421">
    <property type="entry name" value="PyrdxlP-dep_Trfase_major"/>
</dbReference>
<dbReference type="InterPro" id="IPR015422">
    <property type="entry name" value="PyrdxlP-dep_Trfase_small"/>
</dbReference>
<dbReference type="NCBIfam" id="TIGR00713">
    <property type="entry name" value="hemL"/>
    <property type="match status" value="1"/>
</dbReference>
<dbReference type="NCBIfam" id="NF000818">
    <property type="entry name" value="PRK00062.1"/>
    <property type="match status" value="1"/>
</dbReference>
<dbReference type="PANTHER" id="PTHR43713">
    <property type="entry name" value="GLUTAMATE-1-SEMIALDEHYDE 2,1-AMINOMUTASE"/>
    <property type="match status" value="1"/>
</dbReference>
<dbReference type="PANTHER" id="PTHR43713:SF3">
    <property type="entry name" value="GLUTAMATE-1-SEMIALDEHYDE 2,1-AMINOMUTASE 1, CHLOROPLASTIC-RELATED"/>
    <property type="match status" value="1"/>
</dbReference>
<dbReference type="Pfam" id="PF00202">
    <property type="entry name" value="Aminotran_3"/>
    <property type="match status" value="1"/>
</dbReference>
<dbReference type="SUPFAM" id="SSF53383">
    <property type="entry name" value="PLP-dependent transferases"/>
    <property type="match status" value="1"/>
</dbReference>
<dbReference type="PROSITE" id="PS00600">
    <property type="entry name" value="AA_TRANSFER_CLASS_3"/>
    <property type="match status" value="1"/>
</dbReference>
<name>GSA1_STAA1</name>
<proteinExistence type="inferred from homology"/>
<organism>
    <name type="scientific">Staphylococcus aureus (strain Mu3 / ATCC 700698)</name>
    <dbReference type="NCBI Taxonomy" id="418127"/>
    <lineage>
        <taxon>Bacteria</taxon>
        <taxon>Bacillati</taxon>
        <taxon>Bacillota</taxon>
        <taxon>Bacilli</taxon>
        <taxon>Bacillales</taxon>
        <taxon>Staphylococcaceae</taxon>
        <taxon>Staphylococcus</taxon>
    </lineage>
</organism>
<feature type="chain" id="PRO_0000382374" description="Glutamate-1-semialdehyde 2,1-aminomutase 1">
    <location>
        <begin position="1"/>
        <end position="428"/>
    </location>
</feature>
<feature type="modified residue" description="N6-(pyridoxal phosphate)lysine" evidence="1">
    <location>
        <position position="267"/>
    </location>
</feature>
<accession>A7X388</accession>